<name>PURT_SYNS9</name>
<accession>Q3AUF2</accession>
<feature type="chain" id="PRO_0000319248" description="Formate-dependent phosphoribosylglycinamide formyltransferase">
    <location>
        <begin position="1"/>
        <end position="392"/>
    </location>
</feature>
<feature type="domain" description="ATP-grasp" evidence="1">
    <location>
        <begin position="112"/>
        <end position="302"/>
    </location>
</feature>
<feature type="binding site" evidence="1">
    <location>
        <begin position="15"/>
        <end position="16"/>
    </location>
    <ligand>
        <name>N(1)-(5-phospho-beta-D-ribosyl)glycinamide</name>
        <dbReference type="ChEBI" id="CHEBI:143788"/>
    </ligand>
</feature>
<feature type="binding site" evidence="1">
    <location>
        <position position="75"/>
    </location>
    <ligand>
        <name>N(1)-(5-phospho-beta-D-ribosyl)glycinamide</name>
        <dbReference type="ChEBI" id="CHEBI:143788"/>
    </ligand>
</feature>
<feature type="binding site" evidence="1">
    <location>
        <position position="107"/>
    </location>
    <ligand>
        <name>ATP</name>
        <dbReference type="ChEBI" id="CHEBI:30616"/>
    </ligand>
</feature>
<feature type="binding site" evidence="1">
    <location>
        <position position="148"/>
    </location>
    <ligand>
        <name>ATP</name>
        <dbReference type="ChEBI" id="CHEBI:30616"/>
    </ligand>
</feature>
<feature type="binding site" evidence="1">
    <location>
        <begin position="153"/>
        <end position="158"/>
    </location>
    <ligand>
        <name>ATP</name>
        <dbReference type="ChEBI" id="CHEBI:30616"/>
    </ligand>
</feature>
<feature type="binding site" evidence="1">
    <location>
        <begin position="188"/>
        <end position="191"/>
    </location>
    <ligand>
        <name>ATP</name>
        <dbReference type="ChEBI" id="CHEBI:30616"/>
    </ligand>
</feature>
<feature type="binding site" evidence="1">
    <location>
        <position position="196"/>
    </location>
    <ligand>
        <name>ATP</name>
        <dbReference type="ChEBI" id="CHEBI:30616"/>
    </ligand>
</feature>
<feature type="binding site" evidence="1">
    <location>
        <position position="261"/>
    </location>
    <ligand>
        <name>Mg(2+)</name>
        <dbReference type="ChEBI" id="CHEBI:18420"/>
    </ligand>
</feature>
<feature type="binding site" evidence="1">
    <location>
        <position position="273"/>
    </location>
    <ligand>
        <name>Mg(2+)</name>
        <dbReference type="ChEBI" id="CHEBI:18420"/>
    </ligand>
</feature>
<feature type="binding site" evidence="1">
    <location>
        <position position="280"/>
    </location>
    <ligand>
        <name>N(1)-(5-phospho-beta-D-ribosyl)glycinamide</name>
        <dbReference type="ChEBI" id="CHEBI:143788"/>
    </ligand>
</feature>
<feature type="binding site" evidence="1">
    <location>
        <position position="350"/>
    </location>
    <ligand>
        <name>N(1)-(5-phospho-beta-D-ribosyl)glycinamide</name>
        <dbReference type="ChEBI" id="CHEBI:143788"/>
    </ligand>
</feature>
<feature type="binding site" evidence="1">
    <location>
        <begin position="357"/>
        <end position="358"/>
    </location>
    <ligand>
        <name>N(1)-(5-phospho-beta-D-ribosyl)glycinamide</name>
        <dbReference type="ChEBI" id="CHEBI:143788"/>
    </ligand>
</feature>
<reference key="1">
    <citation type="submission" date="2005-08" db="EMBL/GenBank/DDBJ databases">
        <title>Complete sequence of Synechococcus sp. CC9902.</title>
        <authorList>
            <person name="Copeland A."/>
            <person name="Lucas S."/>
            <person name="Lapidus A."/>
            <person name="Barry K."/>
            <person name="Detter J.C."/>
            <person name="Glavina T."/>
            <person name="Hammon N."/>
            <person name="Israni S."/>
            <person name="Pitluck S."/>
            <person name="Martinez M."/>
            <person name="Schmutz J."/>
            <person name="Larimer F."/>
            <person name="Land M."/>
            <person name="Kyrpides N."/>
            <person name="Ivanova N."/>
            <person name="Richardson P."/>
        </authorList>
    </citation>
    <scope>NUCLEOTIDE SEQUENCE [LARGE SCALE GENOMIC DNA]</scope>
    <source>
        <strain>CC9902</strain>
    </source>
</reference>
<proteinExistence type="inferred from homology"/>
<organism>
    <name type="scientific">Synechococcus sp. (strain CC9902)</name>
    <dbReference type="NCBI Taxonomy" id="316279"/>
    <lineage>
        <taxon>Bacteria</taxon>
        <taxon>Bacillati</taxon>
        <taxon>Cyanobacteriota</taxon>
        <taxon>Cyanophyceae</taxon>
        <taxon>Synechococcales</taxon>
        <taxon>Synechococcaceae</taxon>
        <taxon>Synechococcus</taxon>
    </lineage>
</organism>
<keyword id="KW-0067">ATP-binding</keyword>
<keyword id="KW-0436">Ligase</keyword>
<keyword id="KW-0460">Magnesium</keyword>
<keyword id="KW-0479">Metal-binding</keyword>
<keyword id="KW-0547">Nucleotide-binding</keyword>
<keyword id="KW-0658">Purine biosynthesis</keyword>
<keyword id="KW-1185">Reference proteome</keyword>
<gene>
    <name evidence="1" type="primary">purT</name>
    <name type="ordered locus">Syncc9902_2314</name>
</gene>
<comment type="function">
    <text evidence="1">Involved in the de novo purine biosynthesis. Catalyzes the transfer of formate to 5-phospho-ribosyl-glycinamide (GAR), producing 5-phospho-ribosyl-N-formylglycinamide (FGAR). Formate is provided by PurU via hydrolysis of 10-formyl-tetrahydrofolate.</text>
</comment>
<comment type="catalytic activity">
    <reaction evidence="1">
        <text>N(1)-(5-phospho-beta-D-ribosyl)glycinamide + formate + ATP = N(2)-formyl-N(1)-(5-phospho-beta-D-ribosyl)glycinamide + ADP + phosphate + H(+)</text>
        <dbReference type="Rhea" id="RHEA:24829"/>
        <dbReference type="ChEBI" id="CHEBI:15378"/>
        <dbReference type="ChEBI" id="CHEBI:15740"/>
        <dbReference type="ChEBI" id="CHEBI:30616"/>
        <dbReference type="ChEBI" id="CHEBI:43474"/>
        <dbReference type="ChEBI" id="CHEBI:143788"/>
        <dbReference type="ChEBI" id="CHEBI:147286"/>
        <dbReference type="ChEBI" id="CHEBI:456216"/>
        <dbReference type="EC" id="6.3.1.21"/>
    </reaction>
    <physiologicalReaction direction="left-to-right" evidence="1">
        <dbReference type="Rhea" id="RHEA:24830"/>
    </physiologicalReaction>
</comment>
<comment type="pathway">
    <text evidence="1">Purine metabolism; IMP biosynthesis via de novo pathway; N(2)-formyl-N(1)-(5-phospho-D-ribosyl)glycinamide from N(1)-(5-phospho-D-ribosyl)glycinamide (formate route): step 1/1.</text>
</comment>
<comment type="subunit">
    <text evidence="1">Homodimer.</text>
</comment>
<comment type="similarity">
    <text evidence="1">Belongs to the PurK/PurT family.</text>
</comment>
<comment type="sequence caution" evidence="2">
    <conflict type="erroneous initiation">
        <sequence resource="EMBL-CDS" id="ABB27272"/>
    </conflict>
</comment>
<sequence>MTAFPRTVMLLGSGELGKEVAIAAQRLGCRVIACDRYANAPAMQVADTAEVFQMTDATALKEVVQRHRPDVVIPEIEALAVEALAELEQDGITVIPTARATAFTMNRDQIRDLASGELGLHTARFAYASNAAELKKVAAPLGWPVVVKPVMSSSGKGQSVVQTPEQLDQAWEAAMANARGTSNQVIVEEFLEFDLEITLLTIRQRNGETLFCPPIGHEQERGDYQCSWQPAQMSDAQLQQAQTMARTVTDNLGGAGLFGVEFFLCGNEVIFSELSPRPHDTGLVTLISQNLSEFELHLRAVLNLPIPQLTTAPAAASRVILADRELKTVAYEGLEQALREAGTQVLLFGKPNARPNRRMGVALARGEDLSEVRAKADRAAACIQVLDGSARR</sequence>
<dbReference type="EC" id="6.3.1.21" evidence="1"/>
<dbReference type="EMBL" id="CP000097">
    <property type="protein sequence ID" value="ABB27272.1"/>
    <property type="status" value="ALT_INIT"/>
    <property type="molecule type" value="Genomic_DNA"/>
</dbReference>
<dbReference type="RefSeq" id="WP_041425243.1">
    <property type="nucleotide sequence ID" value="NC_007513.1"/>
</dbReference>
<dbReference type="SMR" id="Q3AUF2"/>
<dbReference type="STRING" id="316279.Syncc9902_2314"/>
<dbReference type="KEGG" id="sye:Syncc9902_2314"/>
<dbReference type="eggNOG" id="COG0027">
    <property type="taxonomic scope" value="Bacteria"/>
</dbReference>
<dbReference type="HOGENOM" id="CLU_011534_1_3_3"/>
<dbReference type="OrthoDB" id="9804625at2"/>
<dbReference type="UniPathway" id="UPA00074">
    <property type="reaction ID" value="UER00127"/>
</dbReference>
<dbReference type="Proteomes" id="UP000002712">
    <property type="component" value="Chromosome"/>
</dbReference>
<dbReference type="GO" id="GO:0005829">
    <property type="term" value="C:cytosol"/>
    <property type="evidence" value="ECO:0007669"/>
    <property type="project" value="TreeGrafter"/>
</dbReference>
<dbReference type="GO" id="GO:0005524">
    <property type="term" value="F:ATP binding"/>
    <property type="evidence" value="ECO:0007669"/>
    <property type="project" value="UniProtKB-UniRule"/>
</dbReference>
<dbReference type="GO" id="GO:0000287">
    <property type="term" value="F:magnesium ion binding"/>
    <property type="evidence" value="ECO:0007669"/>
    <property type="project" value="InterPro"/>
</dbReference>
<dbReference type="GO" id="GO:0043815">
    <property type="term" value="F:phosphoribosylglycinamide formyltransferase 2 activity"/>
    <property type="evidence" value="ECO:0007669"/>
    <property type="project" value="UniProtKB-UniRule"/>
</dbReference>
<dbReference type="GO" id="GO:0004644">
    <property type="term" value="F:phosphoribosylglycinamide formyltransferase activity"/>
    <property type="evidence" value="ECO:0007669"/>
    <property type="project" value="InterPro"/>
</dbReference>
<dbReference type="GO" id="GO:0006189">
    <property type="term" value="P:'de novo' IMP biosynthetic process"/>
    <property type="evidence" value="ECO:0007669"/>
    <property type="project" value="UniProtKB-UniRule"/>
</dbReference>
<dbReference type="Gene3D" id="3.40.50.20">
    <property type="match status" value="1"/>
</dbReference>
<dbReference type="Gene3D" id="3.30.1490.20">
    <property type="entry name" value="ATP-grasp fold, A domain"/>
    <property type="match status" value="1"/>
</dbReference>
<dbReference type="Gene3D" id="3.30.470.20">
    <property type="entry name" value="ATP-grasp fold, B domain"/>
    <property type="match status" value="1"/>
</dbReference>
<dbReference type="HAMAP" id="MF_01643">
    <property type="entry name" value="PurT"/>
    <property type="match status" value="1"/>
</dbReference>
<dbReference type="InterPro" id="IPR011761">
    <property type="entry name" value="ATP-grasp"/>
</dbReference>
<dbReference type="InterPro" id="IPR003135">
    <property type="entry name" value="ATP-grasp_carboxylate-amine"/>
</dbReference>
<dbReference type="InterPro" id="IPR013815">
    <property type="entry name" value="ATP_grasp_subdomain_1"/>
</dbReference>
<dbReference type="InterPro" id="IPR016185">
    <property type="entry name" value="PreATP-grasp_dom_sf"/>
</dbReference>
<dbReference type="InterPro" id="IPR005862">
    <property type="entry name" value="PurT"/>
</dbReference>
<dbReference type="InterPro" id="IPR054350">
    <property type="entry name" value="PurT/PurK_preATP-grasp"/>
</dbReference>
<dbReference type="InterPro" id="IPR048740">
    <property type="entry name" value="PurT_C"/>
</dbReference>
<dbReference type="InterPro" id="IPR011054">
    <property type="entry name" value="Rudment_hybrid_motif"/>
</dbReference>
<dbReference type="NCBIfam" id="NF006766">
    <property type="entry name" value="PRK09288.1"/>
    <property type="match status" value="1"/>
</dbReference>
<dbReference type="NCBIfam" id="TIGR01142">
    <property type="entry name" value="purT"/>
    <property type="match status" value="1"/>
</dbReference>
<dbReference type="PANTHER" id="PTHR43055">
    <property type="entry name" value="FORMATE-DEPENDENT PHOSPHORIBOSYLGLYCINAMIDE FORMYLTRANSFERASE"/>
    <property type="match status" value="1"/>
</dbReference>
<dbReference type="PANTHER" id="PTHR43055:SF1">
    <property type="entry name" value="FORMATE-DEPENDENT PHOSPHORIBOSYLGLYCINAMIDE FORMYLTRANSFERASE"/>
    <property type="match status" value="1"/>
</dbReference>
<dbReference type="Pfam" id="PF02222">
    <property type="entry name" value="ATP-grasp"/>
    <property type="match status" value="1"/>
</dbReference>
<dbReference type="Pfam" id="PF21244">
    <property type="entry name" value="PurT_C"/>
    <property type="match status" value="1"/>
</dbReference>
<dbReference type="Pfam" id="PF22660">
    <property type="entry name" value="RS_preATP-grasp-like"/>
    <property type="match status" value="1"/>
</dbReference>
<dbReference type="SUPFAM" id="SSF56059">
    <property type="entry name" value="Glutathione synthetase ATP-binding domain-like"/>
    <property type="match status" value="1"/>
</dbReference>
<dbReference type="SUPFAM" id="SSF52440">
    <property type="entry name" value="PreATP-grasp domain"/>
    <property type="match status" value="1"/>
</dbReference>
<dbReference type="SUPFAM" id="SSF51246">
    <property type="entry name" value="Rudiment single hybrid motif"/>
    <property type="match status" value="1"/>
</dbReference>
<dbReference type="PROSITE" id="PS50975">
    <property type="entry name" value="ATP_GRASP"/>
    <property type="match status" value="1"/>
</dbReference>
<protein>
    <recommendedName>
        <fullName evidence="1">Formate-dependent phosphoribosylglycinamide formyltransferase</fullName>
        <ecNumber evidence="1">6.3.1.21</ecNumber>
    </recommendedName>
    <alternativeName>
        <fullName evidence="1">5'-phosphoribosylglycinamide transformylase 2</fullName>
    </alternativeName>
    <alternativeName>
        <fullName evidence="1">Formate-dependent GAR transformylase</fullName>
    </alternativeName>
    <alternativeName>
        <fullName evidence="1">GAR transformylase 2</fullName>
        <shortName evidence="1">GART 2</shortName>
    </alternativeName>
    <alternativeName>
        <fullName evidence="1">Non-folate glycinamide ribonucleotide transformylase</fullName>
    </alternativeName>
    <alternativeName>
        <fullName evidence="1">Phosphoribosylglycinamide formyltransferase 2</fullName>
    </alternativeName>
</protein>
<evidence type="ECO:0000255" key="1">
    <source>
        <dbReference type="HAMAP-Rule" id="MF_01643"/>
    </source>
</evidence>
<evidence type="ECO:0000305" key="2"/>